<dbReference type="EMBL" id="FO080688">
    <property type="protein sequence ID" value="CCD65817.1"/>
    <property type="molecule type" value="Genomic_DNA"/>
</dbReference>
<dbReference type="RefSeq" id="NP_494965.1">
    <property type="nucleotide sequence ID" value="NM_062564.5"/>
</dbReference>
<dbReference type="FunCoup" id="Q95ZY0">
    <property type="interactions" value="3"/>
</dbReference>
<dbReference type="STRING" id="6239.C27D6.10.1"/>
<dbReference type="PaxDb" id="6239-C27D6.10"/>
<dbReference type="EnsemblMetazoa" id="C27D6.10.1">
    <property type="protein sequence ID" value="C27D6.10.1"/>
    <property type="gene ID" value="WBGene00005066"/>
</dbReference>
<dbReference type="GeneID" id="191783"/>
<dbReference type="KEGG" id="cel:CELE_C27D6.10"/>
<dbReference type="UCSC" id="C27D6.10">
    <property type="organism name" value="c. elegans"/>
</dbReference>
<dbReference type="AGR" id="WB:WBGene00005066"/>
<dbReference type="CTD" id="191783"/>
<dbReference type="WormBase" id="C27D6.10">
    <property type="protein sequence ID" value="CE06890"/>
    <property type="gene ID" value="WBGene00005066"/>
    <property type="gene designation" value="srb-1"/>
</dbReference>
<dbReference type="eggNOG" id="ENOG502RT5J">
    <property type="taxonomic scope" value="Eukaryota"/>
</dbReference>
<dbReference type="GeneTree" id="ENSGT00970000195867"/>
<dbReference type="HOGENOM" id="CLU_045882_1_0_1"/>
<dbReference type="InParanoid" id="Q95ZY0"/>
<dbReference type="OMA" id="HGNIKFM"/>
<dbReference type="PhylomeDB" id="Q95ZY0"/>
<dbReference type="PRO" id="PR:Q95ZY0"/>
<dbReference type="Proteomes" id="UP000001940">
    <property type="component" value="Chromosome II"/>
</dbReference>
<dbReference type="GO" id="GO:0016020">
    <property type="term" value="C:membrane"/>
    <property type="evidence" value="ECO:0007669"/>
    <property type="project" value="UniProtKB-SubCell"/>
</dbReference>
<dbReference type="GO" id="GO:0004888">
    <property type="term" value="F:transmembrane signaling receptor activity"/>
    <property type="evidence" value="ECO:0007669"/>
    <property type="project" value="InterPro"/>
</dbReference>
<dbReference type="GO" id="GO:0007606">
    <property type="term" value="P:sensory perception of chemical stimulus"/>
    <property type="evidence" value="ECO:0007669"/>
    <property type="project" value="InterPro"/>
</dbReference>
<dbReference type="InterPro" id="IPR002184">
    <property type="entry name" value="7TM_GPCR_serpentine_rcpt_Srb"/>
</dbReference>
<dbReference type="PANTHER" id="PTHR31216:SF12">
    <property type="entry name" value="SERPENTINE RECEPTOR CLASS BETA-1-RELATED"/>
    <property type="match status" value="1"/>
</dbReference>
<dbReference type="PANTHER" id="PTHR31216">
    <property type="entry name" value="SERPENTINE RECEPTOR CLASS BETA-1-RELATED-RELATED"/>
    <property type="match status" value="1"/>
</dbReference>
<dbReference type="Pfam" id="PF02175">
    <property type="entry name" value="7TM_GPCR_Srb"/>
    <property type="match status" value="1"/>
</dbReference>
<dbReference type="PRINTS" id="PR00699">
    <property type="entry name" value="TMPROTEINSRB"/>
</dbReference>
<reference key="1">
    <citation type="journal article" date="1998" name="Science">
        <title>Genome sequence of the nematode C. elegans: a platform for investigating biology.</title>
        <authorList>
            <consortium name="The C. elegans sequencing consortium"/>
        </authorList>
    </citation>
    <scope>NUCLEOTIDE SEQUENCE [LARGE SCALE GENOMIC DNA]</scope>
    <source>
        <strain>Bristol N2</strain>
    </source>
</reference>
<accession>Q95ZY0</accession>
<sequence>MNIENKCDLAFEVTYHPLYRAAQFWTFIFSTLAVPALFIFLLKQIFPLPFHGNIKFMLISYFLSAFLFAVVLALTFGYHILVPLFITSKCDLIIQPYLFKVGQLSLTLFITLQMIMPFGFSIERIIALRMAKSYENVRTVLGPLLIFVLIGIDLILLFTVFRDESFNDSFISFILIPATTAQTFNSYCWILLYAELGNLLCNCIILLVHSKFKTKFLHQQRSLSVRYELEEISQTSKFTLIVSFTHILFIGWYLGVTIFIRTVGETFFGSYINYTVARGVYISVPTYNLTIVFVGIKALSFMNLKRQNNVQSKVQIKSTGSEGARNYENAIASYWNSVSKA</sequence>
<keyword id="KW-0472">Membrane</keyword>
<keyword id="KW-1185">Reference proteome</keyword>
<keyword id="KW-0812">Transmembrane</keyword>
<keyword id="KW-1133">Transmembrane helix</keyword>
<proteinExistence type="inferred from homology"/>
<comment type="subcellular location">
    <subcellularLocation>
        <location evidence="2">Membrane</location>
        <topology evidence="2">Multi-pass membrane protein</topology>
    </subcellularLocation>
</comment>
<comment type="similarity">
    <text evidence="2">Belongs to the nematode receptor-like protein srb family.</text>
</comment>
<organism>
    <name type="scientific">Caenorhabditis elegans</name>
    <dbReference type="NCBI Taxonomy" id="6239"/>
    <lineage>
        <taxon>Eukaryota</taxon>
        <taxon>Metazoa</taxon>
        <taxon>Ecdysozoa</taxon>
        <taxon>Nematoda</taxon>
        <taxon>Chromadorea</taxon>
        <taxon>Rhabditida</taxon>
        <taxon>Rhabditina</taxon>
        <taxon>Rhabditomorpha</taxon>
        <taxon>Rhabditoidea</taxon>
        <taxon>Rhabditidae</taxon>
        <taxon>Peloderinae</taxon>
        <taxon>Caenorhabditis</taxon>
    </lineage>
</organism>
<gene>
    <name type="primary">srb-1</name>
    <name type="ORF">C27D6.10</name>
</gene>
<name>SRB1_CAEEL</name>
<feature type="chain" id="PRO_0000104496" description="Serpentine receptor class beta-1">
    <location>
        <begin position="1"/>
        <end position="341"/>
    </location>
</feature>
<feature type="transmembrane region" description="Helical" evidence="1">
    <location>
        <begin position="22"/>
        <end position="42"/>
    </location>
</feature>
<feature type="transmembrane region" description="Helical" evidence="1">
    <location>
        <begin position="66"/>
        <end position="86"/>
    </location>
</feature>
<feature type="transmembrane region" description="Helical" evidence="1">
    <location>
        <begin position="102"/>
        <end position="122"/>
    </location>
</feature>
<feature type="transmembrane region" description="Helical" evidence="1">
    <location>
        <begin position="141"/>
        <end position="161"/>
    </location>
</feature>
<feature type="transmembrane region" description="Helical" evidence="1">
    <location>
        <begin position="188"/>
        <end position="208"/>
    </location>
</feature>
<feature type="transmembrane region" description="Helical" evidence="1">
    <location>
        <begin position="240"/>
        <end position="260"/>
    </location>
</feature>
<feature type="transmembrane region" description="Helical" evidence="1">
    <location>
        <begin position="279"/>
        <end position="299"/>
    </location>
</feature>
<protein>
    <recommendedName>
        <fullName>Serpentine receptor class beta-1</fullName>
        <shortName>Protein srb-1</shortName>
    </recommendedName>
</protein>
<evidence type="ECO:0000255" key="1"/>
<evidence type="ECO:0000305" key="2"/>